<reference key="1">
    <citation type="journal article" date="2004" name="J. Bacteriol.">
        <title>Comparative genomics of two Leptospira interrogans serovars reveals novel insights into physiology and pathogenesis.</title>
        <authorList>
            <person name="Nascimento A.L.T.O."/>
            <person name="Ko A.I."/>
            <person name="Martins E.A.L."/>
            <person name="Monteiro-Vitorello C.B."/>
            <person name="Ho P.L."/>
            <person name="Haake D.A."/>
            <person name="Verjovski-Almeida S."/>
            <person name="Hartskeerl R.A."/>
            <person name="Marques M.V."/>
            <person name="Oliveira M.C."/>
            <person name="Menck C.F.M."/>
            <person name="Leite L.C.C."/>
            <person name="Carrer H."/>
            <person name="Coutinho L.L."/>
            <person name="Degrave W.M."/>
            <person name="Dellagostin O.A."/>
            <person name="El-Dorry H."/>
            <person name="Ferro E.S."/>
            <person name="Ferro M.I.T."/>
            <person name="Furlan L.R."/>
            <person name="Gamberini M."/>
            <person name="Giglioti E.A."/>
            <person name="Goes-Neto A."/>
            <person name="Goldman G.H."/>
            <person name="Goldman M.H.S."/>
            <person name="Harakava R."/>
            <person name="Jeronimo S.M.B."/>
            <person name="Junqueira-de-Azevedo I.L.M."/>
            <person name="Kimura E.T."/>
            <person name="Kuramae E.E."/>
            <person name="Lemos E.G.M."/>
            <person name="Lemos M.V.F."/>
            <person name="Marino C.L."/>
            <person name="Nunes L.R."/>
            <person name="de Oliveira R.C."/>
            <person name="Pereira G.G."/>
            <person name="Reis M.S."/>
            <person name="Schriefer A."/>
            <person name="Siqueira W.J."/>
            <person name="Sommer P."/>
            <person name="Tsai S.M."/>
            <person name="Simpson A.J.G."/>
            <person name="Ferro J.A."/>
            <person name="Camargo L.E.A."/>
            <person name="Kitajima J.P."/>
            <person name="Setubal J.C."/>
            <person name="Van Sluys M.A."/>
        </authorList>
    </citation>
    <scope>NUCLEOTIDE SEQUENCE [LARGE SCALE GENOMIC DNA]</scope>
    <source>
        <strain>Fiocruz L1-130</strain>
    </source>
</reference>
<protein>
    <recommendedName>
        <fullName evidence="1">S-adenosylmethionine decarboxylase proenzyme</fullName>
        <shortName evidence="1">AdoMetDC</shortName>
        <shortName evidence="1">SAMDC</shortName>
        <ecNumber evidence="1">4.1.1.50</ecNumber>
    </recommendedName>
    <component>
        <recommendedName>
            <fullName evidence="1">S-adenosylmethionine decarboxylase beta chain</fullName>
        </recommendedName>
    </component>
    <component>
        <recommendedName>
            <fullName evidence="1">S-adenosylmethionine decarboxylase alpha chain</fullName>
        </recommendedName>
    </component>
</protein>
<accession>Q75FF4</accession>
<evidence type="ECO:0000255" key="1">
    <source>
        <dbReference type="HAMAP-Rule" id="MF_00464"/>
    </source>
</evidence>
<comment type="function">
    <text evidence="1">Catalyzes the decarboxylation of S-adenosylmethionine to S-adenosylmethioninamine (dcAdoMet), the propylamine donor required for the synthesis of the polyamines spermine and spermidine from the diamine putrescine.</text>
</comment>
<comment type="catalytic activity">
    <reaction evidence="1">
        <text>S-adenosyl-L-methionine + H(+) = S-adenosyl 3-(methylsulfanyl)propylamine + CO2</text>
        <dbReference type="Rhea" id="RHEA:15981"/>
        <dbReference type="ChEBI" id="CHEBI:15378"/>
        <dbReference type="ChEBI" id="CHEBI:16526"/>
        <dbReference type="ChEBI" id="CHEBI:57443"/>
        <dbReference type="ChEBI" id="CHEBI:59789"/>
        <dbReference type="EC" id="4.1.1.50"/>
    </reaction>
</comment>
<comment type="cofactor">
    <cofactor evidence="1">
        <name>pyruvate</name>
        <dbReference type="ChEBI" id="CHEBI:15361"/>
    </cofactor>
    <text evidence="1">Binds 1 pyruvoyl group covalently per subunit.</text>
</comment>
<comment type="pathway">
    <text evidence="1">Amine and polyamine biosynthesis; S-adenosylmethioninamine biosynthesis; S-adenosylmethioninamine from S-adenosyl-L-methionine: step 1/1.</text>
</comment>
<comment type="subunit">
    <text evidence="1">Heterotetramer of two alpha and two beta chains arranged as a dimer of alpha/beta heterodimers.</text>
</comment>
<comment type="PTM">
    <text evidence="1">Is synthesized initially as an inactive proenzyme. Formation of the active enzyme involves a self-maturation process in which the active site pyruvoyl group is generated from an internal serine residue via an autocatalytic post-translational modification. Two non-identical subunits are generated from the proenzyme in this reaction, and the pyruvate is formed at the N-terminus of the alpha chain, which is derived from the carboxyl end of the proenzyme. The post-translation cleavage follows an unusual pathway, termed non-hydrolytic serinolysis, in which the side chain hydroxyl group of the serine supplies its oxygen atom to form the C-terminus of the beta chain, while the remainder of the serine residue undergoes an oxidative deamination to produce ammonia and the pyruvoyl group blocking the N-terminus of the alpha chain.</text>
</comment>
<comment type="similarity">
    <text evidence="1">Belongs to the prokaryotic AdoMetDC family. Type 1 subfamily.</text>
</comment>
<keyword id="KW-0068">Autocatalytic cleavage</keyword>
<keyword id="KW-0210">Decarboxylase</keyword>
<keyword id="KW-0456">Lyase</keyword>
<keyword id="KW-0620">Polyamine biosynthesis</keyword>
<keyword id="KW-0670">Pyruvate</keyword>
<keyword id="KW-0949">S-adenosyl-L-methionine</keyword>
<keyword id="KW-0704">Schiff base</keyword>
<keyword id="KW-0745">Spermidine biosynthesis</keyword>
<keyword id="KW-0865">Zymogen</keyword>
<dbReference type="EC" id="4.1.1.50" evidence="1"/>
<dbReference type="EMBL" id="AE016824">
    <property type="protein sequence ID" value="AAS72261.1"/>
    <property type="molecule type" value="Genomic_DNA"/>
</dbReference>
<dbReference type="SMR" id="Q75FF4"/>
<dbReference type="KEGG" id="lic:LIC_20239"/>
<dbReference type="HOGENOM" id="CLU_125470_2_3_12"/>
<dbReference type="UniPathway" id="UPA00331">
    <property type="reaction ID" value="UER00451"/>
</dbReference>
<dbReference type="Proteomes" id="UP000007037">
    <property type="component" value="Chromosome II"/>
</dbReference>
<dbReference type="GO" id="GO:0005829">
    <property type="term" value="C:cytosol"/>
    <property type="evidence" value="ECO:0007669"/>
    <property type="project" value="TreeGrafter"/>
</dbReference>
<dbReference type="GO" id="GO:0004014">
    <property type="term" value="F:adenosylmethionine decarboxylase activity"/>
    <property type="evidence" value="ECO:0007669"/>
    <property type="project" value="UniProtKB-UniRule"/>
</dbReference>
<dbReference type="GO" id="GO:0008295">
    <property type="term" value="P:spermidine biosynthetic process"/>
    <property type="evidence" value="ECO:0007669"/>
    <property type="project" value="UniProtKB-UniRule"/>
</dbReference>
<dbReference type="FunFam" id="3.30.160.750:FF:000004">
    <property type="entry name" value="S-adenosylmethionine decarboxylase proenzyme"/>
    <property type="match status" value="1"/>
</dbReference>
<dbReference type="FunFam" id="3.30.360.110:FF:000001">
    <property type="entry name" value="S-adenosylmethionine decarboxylase proenzyme"/>
    <property type="match status" value="1"/>
</dbReference>
<dbReference type="Gene3D" id="3.30.160.750">
    <property type="match status" value="1"/>
</dbReference>
<dbReference type="Gene3D" id="3.30.360.110">
    <property type="entry name" value="S-adenosylmethionine decarboxylase domain"/>
    <property type="match status" value="1"/>
</dbReference>
<dbReference type="HAMAP" id="MF_00464">
    <property type="entry name" value="AdoMetDC_1"/>
    <property type="match status" value="1"/>
</dbReference>
<dbReference type="InterPro" id="IPR042286">
    <property type="entry name" value="AdoMetDC_C"/>
</dbReference>
<dbReference type="InterPro" id="IPR003826">
    <property type="entry name" value="AdoMetDC_fam_prok"/>
</dbReference>
<dbReference type="InterPro" id="IPR042284">
    <property type="entry name" value="AdoMetDC_N"/>
</dbReference>
<dbReference type="InterPro" id="IPR016067">
    <property type="entry name" value="S-AdoMet_deCO2ase_core"/>
</dbReference>
<dbReference type="InterPro" id="IPR017716">
    <property type="entry name" value="S-AdoMet_deCOase_pro-enz"/>
</dbReference>
<dbReference type="NCBIfam" id="TIGR03330">
    <property type="entry name" value="SAM_DCase_Bsu"/>
    <property type="match status" value="1"/>
</dbReference>
<dbReference type="PANTHER" id="PTHR33866">
    <property type="entry name" value="S-ADENOSYLMETHIONINE DECARBOXYLASE PROENZYME"/>
    <property type="match status" value="1"/>
</dbReference>
<dbReference type="PANTHER" id="PTHR33866:SF2">
    <property type="entry name" value="S-ADENOSYLMETHIONINE DECARBOXYLASE PROENZYME"/>
    <property type="match status" value="1"/>
</dbReference>
<dbReference type="Pfam" id="PF02675">
    <property type="entry name" value="AdoMet_dc"/>
    <property type="match status" value="1"/>
</dbReference>
<dbReference type="SUPFAM" id="SSF56276">
    <property type="entry name" value="S-adenosylmethionine decarboxylase"/>
    <property type="match status" value="1"/>
</dbReference>
<organism>
    <name type="scientific">Leptospira interrogans serogroup Icterohaemorrhagiae serovar copenhageni (strain Fiocruz L1-130)</name>
    <dbReference type="NCBI Taxonomy" id="267671"/>
    <lineage>
        <taxon>Bacteria</taxon>
        <taxon>Pseudomonadati</taxon>
        <taxon>Spirochaetota</taxon>
        <taxon>Spirochaetia</taxon>
        <taxon>Leptospirales</taxon>
        <taxon>Leptospiraceae</taxon>
        <taxon>Leptospira</taxon>
    </lineage>
</organism>
<name>SPEH_LEPIC</name>
<proteinExistence type="inferred from homology"/>
<feature type="chain" id="PRO_0000030107" description="S-adenosylmethionine decarboxylase beta chain" evidence="1">
    <location>
        <begin position="1"/>
        <end position="62"/>
    </location>
</feature>
<feature type="chain" id="PRO_0000030108" description="S-adenosylmethionine decarboxylase alpha chain" evidence="1">
    <location>
        <begin position="63"/>
        <end position="128"/>
    </location>
</feature>
<feature type="active site" description="Schiff-base intermediate with substrate; via pyruvic acid" evidence="1">
    <location>
        <position position="63"/>
    </location>
</feature>
<feature type="active site" description="Proton acceptor; for processing activity" evidence="1">
    <location>
        <position position="68"/>
    </location>
</feature>
<feature type="active site" description="Proton donor; for catalytic activity" evidence="1">
    <location>
        <position position="83"/>
    </location>
</feature>
<feature type="site" description="Cleavage (non-hydrolytic); by autolysis" evidence="1">
    <location>
        <begin position="62"/>
        <end position="63"/>
    </location>
</feature>
<feature type="modified residue" description="Pyruvic acid (Ser); by autocatalysis" evidence="1">
    <location>
        <position position="63"/>
    </location>
</feature>
<gene>
    <name evidence="1" type="primary">speH</name>
    <name type="ordered locus">LIC_20239</name>
</gene>
<sequence length="128" mass="14221">MNALGKHVIAEFYECDYETINNHELVEDIMLKSVDLSGATTIKSVFHRFSPYGVSGVVVVSESHFAIHTWPEYGYCAVDVFTCGDLIDNQAALDYLKEKFGSKNVSVVEMKRGVLNLGVDLHHKPVGN</sequence>